<accession>Q6DF07</accession>
<proteinExistence type="evidence at transcript level"/>
<name>PDC10_XENTR</name>
<evidence type="ECO:0000250" key="1">
    <source>
        <dbReference type="UniProtKB" id="Q6NX65"/>
    </source>
</evidence>
<evidence type="ECO:0000250" key="2">
    <source>
        <dbReference type="UniProtKB" id="Q8VE70"/>
    </source>
</evidence>
<evidence type="ECO:0000250" key="3">
    <source>
        <dbReference type="UniProtKB" id="Q9BUL8"/>
    </source>
</evidence>
<evidence type="ECO:0000305" key="4"/>
<sequence>MRMTMEEMKNEAETTSMVSMPLYAVMYPVFNELEHVNLSAAQTLRAAFIKAEKENPGLTQDIITKILEKKSVEVNFTESLLRMAADDVEEYMVERPEPEFQELNEKARALKQILSKIPDEINDRVRFLQTIKDIASAIKELLDTVNNVFKKYQYQNRRALEHQKKEFVKYSKSFSDTLKTYFKDGKALNVFISANRLIHQTNLILQTFKTVA</sequence>
<protein>
    <recommendedName>
        <fullName>Programmed cell death protein 10</fullName>
    </recommendedName>
</protein>
<gene>
    <name type="primary">pdcd10</name>
</gene>
<keyword id="KW-0037">Angiogenesis</keyword>
<keyword id="KW-0053">Apoptosis</keyword>
<keyword id="KW-1003">Cell membrane</keyword>
<keyword id="KW-0963">Cytoplasm</keyword>
<keyword id="KW-0333">Golgi apparatus</keyword>
<keyword id="KW-0472">Membrane</keyword>
<keyword id="KW-1185">Reference proteome</keyword>
<organism>
    <name type="scientific">Xenopus tropicalis</name>
    <name type="common">Western clawed frog</name>
    <name type="synonym">Silurana tropicalis</name>
    <dbReference type="NCBI Taxonomy" id="8364"/>
    <lineage>
        <taxon>Eukaryota</taxon>
        <taxon>Metazoa</taxon>
        <taxon>Chordata</taxon>
        <taxon>Craniata</taxon>
        <taxon>Vertebrata</taxon>
        <taxon>Euteleostomi</taxon>
        <taxon>Amphibia</taxon>
        <taxon>Batrachia</taxon>
        <taxon>Anura</taxon>
        <taxon>Pipoidea</taxon>
        <taxon>Pipidae</taxon>
        <taxon>Xenopodinae</taxon>
        <taxon>Xenopus</taxon>
        <taxon>Silurana</taxon>
    </lineage>
</organism>
<comment type="function">
    <text evidence="2 3">Promotes cell proliferation. Modulates apoptotic pathways. Increases mitogen-activated protein kinase activity. Important for cell migration, and for normal structure and assembly of the Golgi complex. Important for KDR/VEGFR2 signaling. Required for normal cardiovascular development. Required for normal angiogenesis, vasculogenesis and hematopoiesis during embryonic development. Promotes cell proliferation. Modulates apoptotic pathways. Increases mitogen-activated protein kinase activity and STK26 activity. Important for cell migration, and for normal structure and assembly of the Golgi complex. Part of the striatin-interacting phosphatase and kinase (STRIPAK) complexes. STRIPAK complexes have critical roles in protein (de)phosphorylation and are regulators of multiple signaling pathways including Hippo, MAPK, nuclear receptor and cytoskeleton remodeling. Different types of STRIPAK complexes are involved in a variety of biological processes such as cell growth, differentiation, apoptosis, metabolism and immune regulation (By similarity).</text>
</comment>
<comment type="subcellular location">
    <subcellularLocation>
        <location evidence="3">Cytoplasm</location>
    </subcellularLocation>
    <subcellularLocation>
        <location evidence="1">Golgi apparatus membrane</location>
        <topology evidence="1">Peripheral membrane protein</topology>
        <orientation evidence="1">Cytoplasmic side</orientation>
    </subcellularLocation>
    <subcellularLocation>
        <location evidence="1">Cell membrane</location>
        <topology evidence="1">Peripheral membrane protein</topology>
        <orientation evidence="1">Cytoplasmic side</orientation>
    </subcellularLocation>
</comment>
<comment type="similarity">
    <text evidence="4">Belongs to the PDCD10 family.</text>
</comment>
<dbReference type="EMBL" id="BC076936">
    <property type="protein sequence ID" value="AAH76936.1"/>
    <property type="molecule type" value="mRNA"/>
</dbReference>
<dbReference type="RefSeq" id="NP_001006850.1">
    <property type="nucleotide sequence ID" value="NM_001006849.1"/>
</dbReference>
<dbReference type="RefSeq" id="XP_012818346.2">
    <property type="nucleotide sequence ID" value="XM_012962892.2"/>
</dbReference>
<dbReference type="SMR" id="Q6DF07"/>
<dbReference type="FunCoup" id="Q6DF07">
    <property type="interactions" value="3836"/>
</dbReference>
<dbReference type="STRING" id="8364.ENSXETP00000045024"/>
<dbReference type="PaxDb" id="8364-ENSXETP00000049474"/>
<dbReference type="DNASU" id="448600"/>
<dbReference type="GeneID" id="448600"/>
<dbReference type="KEGG" id="xtr:448600"/>
<dbReference type="AGR" id="Xenbase:XB-GENE-1010361"/>
<dbReference type="CTD" id="11235"/>
<dbReference type="Xenbase" id="XB-GENE-1010361">
    <property type="gene designation" value="pdcd10"/>
</dbReference>
<dbReference type="eggNOG" id="KOG4025">
    <property type="taxonomic scope" value="Eukaryota"/>
</dbReference>
<dbReference type="InParanoid" id="Q6DF07"/>
<dbReference type="OMA" id="HVVLFPI"/>
<dbReference type="OrthoDB" id="6017654at2759"/>
<dbReference type="Proteomes" id="UP000008143">
    <property type="component" value="Chromosome 5"/>
</dbReference>
<dbReference type="Bgee" id="ENSXETG00000022875">
    <property type="expression patterns" value="Expressed in egg cell and 15 other cell types or tissues"/>
</dbReference>
<dbReference type="GO" id="GO:0000139">
    <property type="term" value="C:Golgi membrane"/>
    <property type="evidence" value="ECO:0007669"/>
    <property type="project" value="UniProtKB-SubCell"/>
</dbReference>
<dbReference type="GO" id="GO:0005886">
    <property type="term" value="C:plasma membrane"/>
    <property type="evidence" value="ECO:0007669"/>
    <property type="project" value="UniProtKB-SubCell"/>
</dbReference>
<dbReference type="GO" id="GO:0001525">
    <property type="term" value="P:angiogenesis"/>
    <property type="evidence" value="ECO:0007669"/>
    <property type="project" value="UniProtKB-KW"/>
</dbReference>
<dbReference type="GO" id="GO:0006915">
    <property type="term" value="P:apoptotic process"/>
    <property type="evidence" value="ECO:0007669"/>
    <property type="project" value="UniProtKB-KW"/>
</dbReference>
<dbReference type="FunFam" id="1.10.12.70:FF:000001">
    <property type="entry name" value="Programmed cell death protein 10"/>
    <property type="match status" value="1"/>
</dbReference>
<dbReference type="FunFam" id="1.20.120.330:FF:000006">
    <property type="entry name" value="Programmed cell death protein 10"/>
    <property type="match status" value="1"/>
</dbReference>
<dbReference type="Gene3D" id="1.10.12.70">
    <property type="match status" value="1"/>
</dbReference>
<dbReference type="Gene3D" id="1.20.120.330">
    <property type="entry name" value="Nucleotidyltransferases domain 2"/>
    <property type="match status" value="1"/>
</dbReference>
<dbReference type="InterPro" id="IPR046409">
    <property type="entry name" value="PDC10_dimerisation_sf"/>
</dbReference>
<dbReference type="InterPro" id="IPR009652">
    <property type="entry name" value="PDCD10"/>
</dbReference>
<dbReference type="InterPro" id="IPR048288">
    <property type="entry name" value="PDCD10_N"/>
</dbReference>
<dbReference type="PANTHER" id="PTHR13250:SF1">
    <property type="entry name" value="PROGRAMMED CELL DEATH PROTEIN 10"/>
    <property type="match status" value="1"/>
</dbReference>
<dbReference type="PANTHER" id="PTHR13250">
    <property type="entry name" value="TF-1 CELL APOPTOSIS RELATED PROTEIN-15"/>
    <property type="match status" value="1"/>
</dbReference>
<dbReference type="Pfam" id="PF06840">
    <property type="entry name" value="PDC10_C"/>
    <property type="match status" value="1"/>
</dbReference>
<dbReference type="Pfam" id="PF20929">
    <property type="entry name" value="PDCD10_N"/>
    <property type="match status" value="1"/>
</dbReference>
<feature type="chain" id="PRO_0000187568" description="Programmed cell death protein 10">
    <location>
        <begin position="1"/>
        <end position="212"/>
    </location>
</feature>
<reference key="1">
    <citation type="submission" date="2004-07" db="EMBL/GenBank/DDBJ databases">
        <authorList>
            <consortium name="NIH - Xenopus Gene Collection (XGC) project"/>
        </authorList>
    </citation>
    <scope>NUCLEOTIDE SEQUENCE [LARGE SCALE MRNA]</scope>
</reference>